<protein>
    <recommendedName>
        <fullName evidence="1">Membrane protein insertase YidC</fullName>
    </recommendedName>
    <alternativeName>
        <fullName evidence="1">Foldase YidC</fullName>
    </alternativeName>
    <alternativeName>
        <fullName evidence="1">Membrane integrase YidC</fullName>
    </alternativeName>
    <alternativeName>
        <fullName evidence="1">Membrane protein YidC</fullName>
    </alternativeName>
</protein>
<dbReference type="EMBL" id="CP000304">
    <property type="protein sequence ID" value="ABP81833.1"/>
    <property type="molecule type" value="Genomic_DNA"/>
</dbReference>
<dbReference type="RefSeq" id="WP_011915210.1">
    <property type="nucleotide sequence ID" value="NC_009434.1"/>
</dbReference>
<dbReference type="SMR" id="A4VS82"/>
<dbReference type="GeneID" id="66823505"/>
<dbReference type="KEGG" id="psa:PST_4211"/>
<dbReference type="eggNOG" id="COG0706">
    <property type="taxonomic scope" value="Bacteria"/>
</dbReference>
<dbReference type="HOGENOM" id="CLU_016535_3_0_6"/>
<dbReference type="Proteomes" id="UP000000233">
    <property type="component" value="Chromosome"/>
</dbReference>
<dbReference type="GO" id="GO:0005886">
    <property type="term" value="C:plasma membrane"/>
    <property type="evidence" value="ECO:0007669"/>
    <property type="project" value="UniProtKB-SubCell"/>
</dbReference>
<dbReference type="GO" id="GO:0032977">
    <property type="term" value="F:membrane insertase activity"/>
    <property type="evidence" value="ECO:0007669"/>
    <property type="project" value="InterPro"/>
</dbReference>
<dbReference type="GO" id="GO:0051205">
    <property type="term" value="P:protein insertion into membrane"/>
    <property type="evidence" value="ECO:0007669"/>
    <property type="project" value="TreeGrafter"/>
</dbReference>
<dbReference type="GO" id="GO:0015031">
    <property type="term" value="P:protein transport"/>
    <property type="evidence" value="ECO:0007669"/>
    <property type="project" value="UniProtKB-KW"/>
</dbReference>
<dbReference type="CDD" id="cd20070">
    <property type="entry name" value="5TM_YidC_Alb3"/>
    <property type="match status" value="1"/>
</dbReference>
<dbReference type="CDD" id="cd19961">
    <property type="entry name" value="EcYidC-like_peri"/>
    <property type="match status" value="1"/>
</dbReference>
<dbReference type="Gene3D" id="2.70.98.90">
    <property type="match status" value="1"/>
</dbReference>
<dbReference type="HAMAP" id="MF_01810">
    <property type="entry name" value="YidC_type1"/>
    <property type="match status" value="1"/>
</dbReference>
<dbReference type="InterPro" id="IPR019998">
    <property type="entry name" value="Membr_insert_YidC"/>
</dbReference>
<dbReference type="InterPro" id="IPR028053">
    <property type="entry name" value="Membr_insert_YidC_N"/>
</dbReference>
<dbReference type="InterPro" id="IPR001708">
    <property type="entry name" value="YidC/ALB3/OXA1/COX18"/>
</dbReference>
<dbReference type="InterPro" id="IPR028055">
    <property type="entry name" value="YidC/Oxa/ALB_C"/>
</dbReference>
<dbReference type="InterPro" id="IPR047196">
    <property type="entry name" value="YidC_ALB_C"/>
</dbReference>
<dbReference type="InterPro" id="IPR038221">
    <property type="entry name" value="YidC_periplasmic_sf"/>
</dbReference>
<dbReference type="NCBIfam" id="NF002352">
    <property type="entry name" value="PRK01318.1-3"/>
    <property type="match status" value="1"/>
</dbReference>
<dbReference type="NCBIfam" id="NF002353">
    <property type="entry name" value="PRK01318.1-4"/>
    <property type="match status" value="1"/>
</dbReference>
<dbReference type="NCBIfam" id="TIGR03593">
    <property type="entry name" value="yidC_nterm"/>
    <property type="match status" value="1"/>
</dbReference>
<dbReference type="NCBIfam" id="TIGR03592">
    <property type="entry name" value="yidC_oxa1_cterm"/>
    <property type="match status" value="1"/>
</dbReference>
<dbReference type="PANTHER" id="PTHR12428:SF65">
    <property type="entry name" value="CYTOCHROME C OXIDASE ASSEMBLY PROTEIN COX18, MITOCHONDRIAL"/>
    <property type="match status" value="1"/>
</dbReference>
<dbReference type="PANTHER" id="PTHR12428">
    <property type="entry name" value="OXA1"/>
    <property type="match status" value="1"/>
</dbReference>
<dbReference type="Pfam" id="PF02096">
    <property type="entry name" value="60KD_IMP"/>
    <property type="match status" value="1"/>
</dbReference>
<dbReference type="Pfam" id="PF14849">
    <property type="entry name" value="YidC_periplas"/>
    <property type="match status" value="1"/>
</dbReference>
<dbReference type="PRINTS" id="PR00701">
    <property type="entry name" value="60KDINNERMP"/>
</dbReference>
<dbReference type="PRINTS" id="PR01900">
    <property type="entry name" value="YIDCPROTEIN"/>
</dbReference>
<reference key="1">
    <citation type="journal article" date="2008" name="Proc. Natl. Acad. Sci. U.S.A.">
        <title>Nitrogen fixation island and rhizosphere competence traits in the genome of root-associated Pseudomonas stutzeri A1501.</title>
        <authorList>
            <person name="Yan Y."/>
            <person name="Yang J."/>
            <person name="Dou Y."/>
            <person name="Chen M."/>
            <person name="Ping S."/>
            <person name="Peng J."/>
            <person name="Lu W."/>
            <person name="Zhang W."/>
            <person name="Yao Z."/>
            <person name="Li H."/>
            <person name="Liu W."/>
            <person name="He S."/>
            <person name="Geng L."/>
            <person name="Zhang X."/>
            <person name="Yang F."/>
            <person name="Yu H."/>
            <person name="Zhan Y."/>
            <person name="Li D."/>
            <person name="Lin Z."/>
            <person name="Wang Y."/>
            <person name="Elmerich C."/>
            <person name="Lin M."/>
            <person name="Jin Q."/>
        </authorList>
    </citation>
    <scope>NUCLEOTIDE SEQUENCE [LARGE SCALE GENOMIC DNA]</scope>
    <source>
        <strain>A1501</strain>
    </source>
</reference>
<feature type="chain" id="PRO_1000070146" description="Membrane protein insertase YidC">
    <location>
        <begin position="1"/>
        <end position="556"/>
    </location>
</feature>
<feature type="transmembrane region" description="Helical" evidence="1">
    <location>
        <begin position="7"/>
        <end position="27"/>
    </location>
</feature>
<feature type="transmembrane region" description="Helical" evidence="1">
    <location>
        <begin position="365"/>
        <end position="385"/>
    </location>
</feature>
<feature type="transmembrane region" description="Helical" evidence="1">
    <location>
        <begin position="435"/>
        <end position="455"/>
    </location>
</feature>
<feature type="transmembrane region" description="Helical" evidence="1">
    <location>
        <begin position="468"/>
        <end position="488"/>
    </location>
</feature>
<feature type="transmembrane region" description="Helical" evidence="1">
    <location>
        <begin position="513"/>
        <end position="533"/>
    </location>
</feature>
<feature type="region of interest" description="Disordered" evidence="2">
    <location>
        <begin position="35"/>
        <end position="59"/>
    </location>
</feature>
<feature type="region of interest" description="Disordered" evidence="2">
    <location>
        <begin position="126"/>
        <end position="152"/>
    </location>
</feature>
<feature type="compositionally biased region" description="Low complexity" evidence="2">
    <location>
        <begin position="36"/>
        <end position="54"/>
    </location>
</feature>
<name>YIDC_STUS1</name>
<comment type="function">
    <text evidence="1">Required for the insertion and/or proper folding and/or complex formation of integral membrane proteins into the membrane. Involved in integration of membrane proteins that insert both dependently and independently of the Sec translocase complex, as well as at least some lipoproteins. Aids folding of multispanning membrane proteins.</text>
</comment>
<comment type="subunit">
    <text evidence="1">Interacts with the Sec translocase complex via SecD. Specifically interacts with transmembrane segments of nascent integral membrane proteins during membrane integration.</text>
</comment>
<comment type="subcellular location">
    <subcellularLocation>
        <location evidence="1">Cell inner membrane</location>
        <topology evidence="1">Multi-pass membrane protein</topology>
    </subcellularLocation>
</comment>
<comment type="similarity">
    <text evidence="1">Belongs to the OXA1/ALB3/YidC family. Type 1 subfamily.</text>
</comment>
<evidence type="ECO:0000255" key="1">
    <source>
        <dbReference type="HAMAP-Rule" id="MF_01810"/>
    </source>
</evidence>
<evidence type="ECO:0000256" key="2">
    <source>
        <dbReference type="SAM" id="MobiDB-lite"/>
    </source>
</evidence>
<gene>
    <name evidence="1" type="primary">yidC</name>
    <name type="ordered locus">PST_4211</name>
</gene>
<keyword id="KW-0997">Cell inner membrane</keyword>
<keyword id="KW-1003">Cell membrane</keyword>
<keyword id="KW-0143">Chaperone</keyword>
<keyword id="KW-0472">Membrane</keyword>
<keyword id="KW-0653">Protein transport</keyword>
<keyword id="KW-1185">Reference proteome</keyword>
<keyword id="KW-0812">Transmembrane</keyword>
<keyword id="KW-1133">Transmembrane helix</keyword>
<keyword id="KW-0813">Transport</keyword>
<organism>
    <name type="scientific">Stutzerimonas stutzeri (strain A1501)</name>
    <name type="common">Pseudomonas stutzeri</name>
    <dbReference type="NCBI Taxonomy" id="379731"/>
    <lineage>
        <taxon>Bacteria</taxon>
        <taxon>Pseudomonadati</taxon>
        <taxon>Pseudomonadota</taxon>
        <taxon>Gammaproteobacteria</taxon>
        <taxon>Pseudomonadales</taxon>
        <taxon>Pseudomonadaceae</taxon>
        <taxon>Stutzerimonas</taxon>
    </lineage>
</organism>
<proteinExistence type="inferred from homology"/>
<sequence>MDIKRSILLVALAVVAYLMVLQWNQDYGQAALPTETAQSQPAAPALPDSPSATTEGNANDVPAVAGQQQASALPTSAPSSQLIRVRTDVLDLAIDPRGGDIVELHLPQYPRRQDRPDVPFQLFERSSERTYEAQSGLIGDGPDKASGRPQYSSEKTEYQLAEGQDALVVDLNYSADGVNYIKRFTLERGNYALKVNYLIDNQSQQPWTGYLFGQLKRDKSGDPSSSTATGTATYLGAALWTKDEPYRKVSMSNMDDKNLRETVQGGWIAWLQHYFVTAWIPQAGDTNQVQTRKDSQGNYIIGFTGPAVTVPAGAQGETGATLYAGPKSQDKLEELSPGLRLTVDYGILWFIAQPIFWLLQNIHALLGNWGWSIIVLTIVIKLAFFPLSAASYRSMARMRAVSPKMQALKEQFGDDRQKMSQAMMELYKKEKINPLGGCLPILVQMPVFLALYWVLLESVEMRQAPWMFWITDLSIKDPYFILPIIMGVTMFIQQQLNPTPPDPMQARVMKLLPIIFTFFFLWFPAGLVLYWVVNNILSIAQQWYITRQIEAGAKPA</sequence>
<accession>A4VS82</accession>